<keyword id="KW-0255">Endonuclease</keyword>
<keyword id="KW-0378">Hydrolase</keyword>
<keyword id="KW-0479">Metal-binding</keyword>
<keyword id="KW-0540">Nuclease</keyword>
<keyword id="KW-1185">Reference proteome</keyword>
<keyword id="KW-0819">tRNA processing</keyword>
<keyword id="KW-0862">Zinc</keyword>
<feature type="chain" id="PRO_0000155859" description="Ribonuclease Z">
    <location>
        <begin position="1"/>
        <end position="309"/>
    </location>
</feature>
<feature type="active site" description="Proton acceptor" evidence="1">
    <location>
        <position position="65"/>
    </location>
</feature>
<feature type="binding site" evidence="1">
    <location>
        <position position="61"/>
    </location>
    <ligand>
        <name>Zn(2+)</name>
        <dbReference type="ChEBI" id="CHEBI:29105"/>
        <label>1</label>
        <note>catalytic</note>
    </ligand>
</feature>
<feature type="binding site" evidence="1">
    <location>
        <position position="63"/>
    </location>
    <ligand>
        <name>Zn(2+)</name>
        <dbReference type="ChEBI" id="CHEBI:29105"/>
        <label>1</label>
        <note>catalytic</note>
    </ligand>
</feature>
<feature type="binding site" evidence="1">
    <location>
        <position position="65"/>
    </location>
    <ligand>
        <name>Zn(2+)</name>
        <dbReference type="ChEBI" id="CHEBI:29105"/>
        <label>2</label>
        <note>catalytic</note>
    </ligand>
</feature>
<feature type="binding site" evidence="1">
    <location>
        <position position="66"/>
    </location>
    <ligand>
        <name>Zn(2+)</name>
        <dbReference type="ChEBI" id="CHEBI:29105"/>
        <label>2</label>
        <note>catalytic</note>
    </ligand>
</feature>
<feature type="binding site" evidence="1">
    <location>
        <position position="144"/>
    </location>
    <ligand>
        <name>Zn(2+)</name>
        <dbReference type="ChEBI" id="CHEBI:29105"/>
        <label>1</label>
        <note>catalytic</note>
    </ligand>
</feature>
<feature type="binding site" evidence="1">
    <location>
        <position position="212"/>
    </location>
    <ligand>
        <name>Zn(2+)</name>
        <dbReference type="ChEBI" id="CHEBI:29105"/>
        <label>1</label>
        <note>catalytic</note>
    </ligand>
</feature>
<feature type="binding site" evidence="1">
    <location>
        <position position="212"/>
    </location>
    <ligand>
        <name>Zn(2+)</name>
        <dbReference type="ChEBI" id="CHEBI:29105"/>
        <label>2</label>
        <note>catalytic</note>
    </ligand>
</feature>
<feature type="binding site" evidence="1">
    <location>
        <position position="271"/>
    </location>
    <ligand>
        <name>Zn(2+)</name>
        <dbReference type="ChEBI" id="CHEBI:29105"/>
        <label>2</label>
        <note>catalytic</note>
    </ligand>
</feature>
<comment type="function">
    <text evidence="1">Zinc phosphodiesterase, which displays some tRNA 3'-processing endonuclease activity. Probably involved in tRNA maturation, by removing a 3'-trailer from precursor tRNA.</text>
</comment>
<comment type="catalytic activity">
    <reaction evidence="1">
        <text>Endonucleolytic cleavage of RNA, removing extra 3' nucleotides from tRNA precursor, generating 3' termini of tRNAs. A 3'-hydroxy group is left at the tRNA terminus and a 5'-phosphoryl group is left at the trailer molecule.</text>
        <dbReference type="EC" id="3.1.26.11"/>
    </reaction>
</comment>
<comment type="cofactor">
    <cofactor evidence="1">
        <name>Zn(2+)</name>
        <dbReference type="ChEBI" id="CHEBI:29105"/>
    </cofactor>
    <text evidence="1">Binds 2 Zn(2+) ions.</text>
</comment>
<comment type="subunit">
    <text evidence="1">Homodimer.</text>
</comment>
<comment type="similarity">
    <text evidence="1">Belongs to the RNase Z family.</text>
</comment>
<comment type="sequence caution" evidence="2">
    <conflict type="erroneous initiation">
        <sequence resource="EMBL-CDS" id="AAK79551"/>
    </conflict>
    <text>Extended N-terminus.</text>
</comment>
<gene>
    <name evidence="1" type="primary">rnz</name>
    <name type="ordered locus">CA_C1584</name>
</gene>
<dbReference type="EC" id="3.1.26.11" evidence="1"/>
<dbReference type="EMBL" id="AE001437">
    <property type="protein sequence ID" value="AAK79551.1"/>
    <property type="status" value="ALT_INIT"/>
    <property type="molecule type" value="Genomic_DNA"/>
</dbReference>
<dbReference type="PIR" id="D97095">
    <property type="entry name" value="D97095"/>
</dbReference>
<dbReference type="RefSeq" id="NP_348211.1">
    <property type="nucleotide sequence ID" value="NC_003030.1"/>
</dbReference>
<dbReference type="RefSeq" id="WP_014518928.1">
    <property type="nucleotide sequence ID" value="NC_003030.1"/>
</dbReference>
<dbReference type="SMR" id="Q97IQ6"/>
<dbReference type="STRING" id="272562.CA_C1584"/>
<dbReference type="KEGG" id="cac:CA_C1584"/>
<dbReference type="PATRIC" id="fig|272562.8.peg.1784"/>
<dbReference type="eggNOG" id="COG1234">
    <property type="taxonomic scope" value="Bacteria"/>
</dbReference>
<dbReference type="HOGENOM" id="CLU_031317_2_1_9"/>
<dbReference type="OrthoDB" id="9800940at2"/>
<dbReference type="Proteomes" id="UP000000814">
    <property type="component" value="Chromosome"/>
</dbReference>
<dbReference type="GO" id="GO:0042781">
    <property type="term" value="F:3'-tRNA processing endoribonuclease activity"/>
    <property type="evidence" value="ECO:0007669"/>
    <property type="project" value="UniProtKB-UniRule"/>
</dbReference>
<dbReference type="GO" id="GO:0008270">
    <property type="term" value="F:zinc ion binding"/>
    <property type="evidence" value="ECO:0007669"/>
    <property type="project" value="UniProtKB-UniRule"/>
</dbReference>
<dbReference type="CDD" id="cd07717">
    <property type="entry name" value="RNaseZ_ZiPD-like_MBL-fold"/>
    <property type="match status" value="1"/>
</dbReference>
<dbReference type="Gene3D" id="3.60.15.10">
    <property type="entry name" value="Ribonuclease Z/Hydroxyacylglutathione hydrolase-like"/>
    <property type="match status" value="1"/>
</dbReference>
<dbReference type="HAMAP" id="MF_01818">
    <property type="entry name" value="RNase_Z_BN"/>
    <property type="match status" value="1"/>
</dbReference>
<dbReference type="InterPro" id="IPR001279">
    <property type="entry name" value="Metallo-B-lactamas"/>
</dbReference>
<dbReference type="InterPro" id="IPR036866">
    <property type="entry name" value="RibonucZ/Hydroxyglut_hydro"/>
</dbReference>
<dbReference type="InterPro" id="IPR013471">
    <property type="entry name" value="RNase_Z/BN"/>
</dbReference>
<dbReference type="NCBIfam" id="NF000801">
    <property type="entry name" value="PRK00055.1-3"/>
    <property type="match status" value="1"/>
</dbReference>
<dbReference type="NCBIfam" id="TIGR02651">
    <property type="entry name" value="RNase_Z"/>
    <property type="match status" value="1"/>
</dbReference>
<dbReference type="PANTHER" id="PTHR46018">
    <property type="entry name" value="ZINC PHOSPHODIESTERASE ELAC PROTEIN 1"/>
    <property type="match status" value="1"/>
</dbReference>
<dbReference type="PANTHER" id="PTHR46018:SF2">
    <property type="entry name" value="ZINC PHOSPHODIESTERASE ELAC PROTEIN 1"/>
    <property type="match status" value="1"/>
</dbReference>
<dbReference type="Pfam" id="PF00753">
    <property type="entry name" value="Lactamase_B"/>
    <property type="match status" value="1"/>
</dbReference>
<dbReference type="SMART" id="SM00849">
    <property type="entry name" value="Lactamase_B"/>
    <property type="match status" value="1"/>
</dbReference>
<dbReference type="SUPFAM" id="SSF56281">
    <property type="entry name" value="Metallo-hydrolase/oxidoreductase"/>
    <property type="match status" value="1"/>
</dbReference>
<sequence length="309" mass="34960">MLDICLLGCGGSLPTSDRNLTSLLISYNGRKILIDCGEGTQVSMKEIAWGFKDIDVICFTHYHADHVMGLTGLLLTIANSGRIDPLTIIGPEGLREVVKGLTVVAPFFPYEIELIELDSKCSDNFLDKVFKIEDVEIFALPVDHSIECLSYSVRVNRKRKFDVNKAKANEVPLKIWNELQRGKEITYENKLYVPDMVLGESRKGIKITYCTDTRPVDSLHKFAYKSDLFVCEGMYGEEEKKEKAVDKKHMIFSEAAGIAKAAEVKELWLTHFSPALSEPEKYLENAKEIFENTHIGSDRKIKIINFENN</sequence>
<name>RNZ_CLOAB</name>
<proteinExistence type="inferred from homology"/>
<accession>Q97IQ6</accession>
<organism>
    <name type="scientific">Clostridium acetobutylicum (strain ATCC 824 / DSM 792 / JCM 1419 / IAM 19013 / LMG 5710 / NBRC 13948 / NRRL B-527 / VKM B-1787 / 2291 / W)</name>
    <dbReference type="NCBI Taxonomy" id="272562"/>
    <lineage>
        <taxon>Bacteria</taxon>
        <taxon>Bacillati</taxon>
        <taxon>Bacillota</taxon>
        <taxon>Clostridia</taxon>
        <taxon>Eubacteriales</taxon>
        <taxon>Clostridiaceae</taxon>
        <taxon>Clostridium</taxon>
    </lineage>
</organism>
<protein>
    <recommendedName>
        <fullName evidence="1">Ribonuclease Z</fullName>
        <shortName evidence="1">RNase Z</shortName>
        <ecNumber evidence="1">3.1.26.11</ecNumber>
    </recommendedName>
    <alternativeName>
        <fullName evidence="1">tRNA 3 endonuclease</fullName>
    </alternativeName>
    <alternativeName>
        <fullName evidence="1">tRNase Z</fullName>
    </alternativeName>
</protein>
<reference key="1">
    <citation type="journal article" date="2001" name="J. Bacteriol.">
        <title>Genome sequence and comparative analysis of the solvent-producing bacterium Clostridium acetobutylicum.</title>
        <authorList>
            <person name="Noelling J."/>
            <person name="Breton G."/>
            <person name="Omelchenko M.V."/>
            <person name="Makarova K.S."/>
            <person name="Zeng Q."/>
            <person name="Gibson R."/>
            <person name="Lee H.M."/>
            <person name="Dubois J."/>
            <person name="Qiu D."/>
            <person name="Hitti J."/>
            <person name="Wolf Y.I."/>
            <person name="Tatusov R.L."/>
            <person name="Sabathe F."/>
            <person name="Doucette-Stamm L.A."/>
            <person name="Soucaille P."/>
            <person name="Daly M.J."/>
            <person name="Bennett G.N."/>
            <person name="Koonin E.V."/>
            <person name="Smith D.R."/>
        </authorList>
    </citation>
    <scope>NUCLEOTIDE SEQUENCE [LARGE SCALE GENOMIC DNA]</scope>
    <source>
        <strain>ATCC 824 / DSM 792 / JCM 1419 / IAM 19013 / LMG 5710 / NBRC 13948 / NRRL B-527 / VKM B-1787 / 2291 / W</strain>
    </source>
</reference>
<evidence type="ECO:0000255" key="1">
    <source>
        <dbReference type="HAMAP-Rule" id="MF_01818"/>
    </source>
</evidence>
<evidence type="ECO:0000305" key="2"/>